<protein>
    <recommendedName>
        <fullName>Probable CDP-diacylglycerol pyrophosphatase</fullName>
        <ecNumber>3.6.1.26</ecNumber>
    </recommendedName>
    <alternativeName>
        <fullName>CDP-diacylglycerol phosphatidylhydrolase</fullName>
    </alternativeName>
    <alternativeName>
        <fullName>CDP-diglyceride hydrolase</fullName>
    </alternativeName>
</protein>
<feature type="chain" id="PRO_0000198580" description="Probable CDP-diacylglycerol pyrophosphatase">
    <location>
        <begin position="1"/>
        <end position="260"/>
    </location>
</feature>
<feature type="transmembrane region" description="Helical" evidence="1">
    <location>
        <begin position="10"/>
        <end position="30"/>
    </location>
</feature>
<evidence type="ECO:0000255" key="1"/>
<evidence type="ECO:0000305" key="2"/>
<dbReference type="EC" id="3.6.1.26"/>
<dbReference type="EMBL" id="AL123456">
    <property type="protein sequence ID" value="CCP45071.1"/>
    <property type="molecule type" value="Genomic_DNA"/>
</dbReference>
<dbReference type="PIR" id="E70732">
    <property type="entry name" value="E70732"/>
</dbReference>
<dbReference type="RefSeq" id="NP_216805.1">
    <property type="nucleotide sequence ID" value="NC_000962.3"/>
</dbReference>
<dbReference type="RefSeq" id="WP_003411717.1">
    <property type="nucleotide sequence ID" value="NZ_NVQJ01000012.1"/>
</dbReference>
<dbReference type="SMR" id="P9WPG9"/>
<dbReference type="STRING" id="83332.Rv2289"/>
<dbReference type="PaxDb" id="83332-Rv2289"/>
<dbReference type="DNASU" id="887342"/>
<dbReference type="GeneID" id="887342"/>
<dbReference type="KEGG" id="mtu:Rv2289"/>
<dbReference type="KEGG" id="mtv:RVBD_2289"/>
<dbReference type="TubercuList" id="Rv2289"/>
<dbReference type="eggNOG" id="COG2134">
    <property type="taxonomic scope" value="Bacteria"/>
</dbReference>
<dbReference type="InParanoid" id="P9WPG9"/>
<dbReference type="OrthoDB" id="481399at2"/>
<dbReference type="PhylomeDB" id="P9WPG9"/>
<dbReference type="UniPathway" id="UPA00609">
    <property type="reaction ID" value="UER00664"/>
</dbReference>
<dbReference type="Proteomes" id="UP000001584">
    <property type="component" value="Chromosome"/>
</dbReference>
<dbReference type="GO" id="GO:0005886">
    <property type="term" value="C:plasma membrane"/>
    <property type="evidence" value="ECO:0007005"/>
    <property type="project" value="MTBBASE"/>
</dbReference>
<dbReference type="GO" id="GO:0008715">
    <property type="term" value="F:CDP-diacylglycerol diphosphatase activity"/>
    <property type="evidence" value="ECO:0007669"/>
    <property type="project" value="UniProtKB-UniRule"/>
</dbReference>
<dbReference type="GO" id="GO:0046342">
    <property type="term" value="P:CDP-diacylglycerol catabolic process"/>
    <property type="evidence" value="ECO:0007669"/>
    <property type="project" value="UniProtKB-UniRule"/>
</dbReference>
<dbReference type="GO" id="GO:0008654">
    <property type="term" value="P:phospholipid biosynthetic process"/>
    <property type="evidence" value="ECO:0007669"/>
    <property type="project" value="UniProtKB-KW"/>
</dbReference>
<dbReference type="Gene3D" id="3.30.428.30">
    <property type="entry name" value="HIT family - CDH-like"/>
    <property type="match status" value="1"/>
</dbReference>
<dbReference type="HAMAP" id="MF_00319">
    <property type="entry name" value="Cdh"/>
    <property type="match status" value="1"/>
</dbReference>
<dbReference type="InterPro" id="IPR003763">
    <property type="entry name" value="CDP-diacylglyc_Pase"/>
</dbReference>
<dbReference type="InterPro" id="IPR036265">
    <property type="entry name" value="HIT-like_sf"/>
</dbReference>
<dbReference type="NCBIfam" id="NF003982">
    <property type="entry name" value="PRK05471.1-1"/>
    <property type="match status" value="1"/>
</dbReference>
<dbReference type="Pfam" id="PF02611">
    <property type="entry name" value="CDH"/>
    <property type="match status" value="1"/>
</dbReference>
<dbReference type="PIRSF" id="PIRSF001273">
    <property type="entry name" value="CDH"/>
    <property type="match status" value="1"/>
</dbReference>
<dbReference type="SUPFAM" id="SSF54197">
    <property type="entry name" value="HIT-like"/>
    <property type="match status" value="1"/>
</dbReference>
<organism>
    <name type="scientific">Mycobacterium tuberculosis (strain ATCC 25618 / H37Rv)</name>
    <dbReference type="NCBI Taxonomy" id="83332"/>
    <lineage>
        <taxon>Bacteria</taxon>
        <taxon>Bacillati</taxon>
        <taxon>Actinomycetota</taxon>
        <taxon>Actinomycetes</taxon>
        <taxon>Mycobacteriales</taxon>
        <taxon>Mycobacteriaceae</taxon>
        <taxon>Mycobacterium</taxon>
        <taxon>Mycobacterium tuberculosis complex</taxon>
    </lineage>
</organism>
<name>CDH_MYCTU</name>
<keyword id="KW-1003">Cell membrane</keyword>
<keyword id="KW-0378">Hydrolase</keyword>
<keyword id="KW-0444">Lipid biosynthesis</keyword>
<keyword id="KW-0443">Lipid metabolism</keyword>
<keyword id="KW-0472">Membrane</keyword>
<keyword id="KW-0594">Phospholipid biosynthesis</keyword>
<keyword id="KW-1208">Phospholipid metabolism</keyword>
<keyword id="KW-1185">Reference proteome</keyword>
<keyword id="KW-0812">Transmembrane</keyword>
<keyword id="KW-1133">Transmembrane helix</keyword>
<reference key="1">
    <citation type="journal article" date="1998" name="Nature">
        <title>Deciphering the biology of Mycobacterium tuberculosis from the complete genome sequence.</title>
        <authorList>
            <person name="Cole S.T."/>
            <person name="Brosch R."/>
            <person name="Parkhill J."/>
            <person name="Garnier T."/>
            <person name="Churcher C.M."/>
            <person name="Harris D.E."/>
            <person name="Gordon S.V."/>
            <person name="Eiglmeier K."/>
            <person name="Gas S."/>
            <person name="Barry C.E. III"/>
            <person name="Tekaia F."/>
            <person name="Badcock K."/>
            <person name="Basham D."/>
            <person name="Brown D."/>
            <person name="Chillingworth T."/>
            <person name="Connor R."/>
            <person name="Davies R.M."/>
            <person name="Devlin K."/>
            <person name="Feltwell T."/>
            <person name="Gentles S."/>
            <person name="Hamlin N."/>
            <person name="Holroyd S."/>
            <person name="Hornsby T."/>
            <person name="Jagels K."/>
            <person name="Krogh A."/>
            <person name="McLean J."/>
            <person name="Moule S."/>
            <person name="Murphy L.D."/>
            <person name="Oliver S."/>
            <person name="Osborne J."/>
            <person name="Quail M.A."/>
            <person name="Rajandream M.A."/>
            <person name="Rogers J."/>
            <person name="Rutter S."/>
            <person name="Seeger K."/>
            <person name="Skelton S."/>
            <person name="Squares S."/>
            <person name="Squares R."/>
            <person name="Sulston J.E."/>
            <person name="Taylor K."/>
            <person name="Whitehead S."/>
            <person name="Barrell B.G."/>
        </authorList>
    </citation>
    <scope>NUCLEOTIDE SEQUENCE [LARGE SCALE GENOMIC DNA]</scope>
    <source>
        <strain>ATCC 25618 / H37Rv</strain>
    </source>
</reference>
<reference key="2">
    <citation type="journal article" date="2011" name="Mol. Cell. Proteomics">
        <title>Proteogenomic analysis of Mycobacterium tuberculosis by high resolution mass spectrometry.</title>
        <authorList>
            <person name="Kelkar D.S."/>
            <person name="Kumar D."/>
            <person name="Kumar P."/>
            <person name="Balakrishnan L."/>
            <person name="Muthusamy B."/>
            <person name="Yadav A.K."/>
            <person name="Shrivastava P."/>
            <person name="Marimuthu A."/>
            <person name="Anand S."/>
            <person name="Sundaram H."/>
            <person name="Kingsbury R."/>
            <person name="Harsha H.C."/>
            <person name="Nair B."/>
            <person name="Prasad T.S."/>
            <person name="Chauhan D.S."/>
            <person name="Katoch K."/>
            <person name="Katoch V.M."/>
            <person name="Kumar P."/>
            <person name="Chaerkady R."/>
            <person name="Ramachandran S."/>
            <person name="Dash D."/>
            <person name="Pandey A."/>
        </authorList>
    </citation>
    <scope>IDENTIFICATION BY MASS SPECTROMETRY [LARGE SCALE ANALYSIS]</scope>
    <source>
        <strain>ATCC 25618 / H37Rv</strain>
    </source>
</reference>
<accession>P9WPG9</accession>
<accession>L0TC27</accession>
<accession>P63751</accession>
<accession>Q50676</accession>
<proteinExistence type="evidence at protein level"/>
<sequence length="260" mass="28608">MPKSRRAVSLSVLIGAVIAALAGALIAVTVPARPNRPEADREALWKIVHDRCEFGYRRTGAYAPCTFVDEQSGTALYKADFDPYQFLLIPLARITGIEDPALRESAGRNYLYDAWAARFLVTARLNNSLPESDVVLTINPKNARTQDQLHIHISCSSPTTSAALRNVDTSEYVGWKQLPIDLGGRRFQGLAVDTKAFESRNLFRDIYLKVTADGKKMENASIAVANVAQDQFLLLLAEGTEDQPVAAETLQDHDCSITKS</sequence>
<comment type="catalytic activity">
    <reaction>
        <text>a CDP-1,2-diacyl-sn-glycerol + H2O = a 1,2-diacyl-sn-glycero-3-phosphate + CMP + 2 H(+)</text>
        <dbReference type="Rhea" id="RHEA:15221"/>
        <dbReference type="ChEBI" id="CHEBI:15377"/>
        <dbReference type="ChEBI" id="CHEBI:15378"/>
        <dbReference type="ChEBI" id="CHEBI:58332"/>
        <dbReference type="ChEBI" id="CHEBI:58608"/>
        <dbReference type="ChEBI" id="CHEBI:60377"/>
        <dbReference type="EC" id="3.6.1.26"/>
    </reaction>
</comment>
<comment type="pathway">
    <text>Phospholipid metabolism; CDP-diacylglycerol degradation; phosphatidate from CDP-diacylglycerol: step 1/1.</text>
</comment>
<comment type="subcellular location">
    <subcellularLocation>
        <location evidence="2">Cell membrane</location>
        <topology evidence="2">Single-pass membrane protein</topology>
    </subcellularLocation>
</comment>
<comment type="similarity">
    <text evidence="2">Belongs to the Cdh family.</text>
</comment>
<gene>
    <name type="primary">cdh</name>
    <name type="ordered locus">Rv2289</name>
    <name type="ORF">MTCY339.21c</name>
</gene>